<accession>Q39493</accession>
<proteinExistence type="evidence at transcript level"/>
<comment type="function">
    <text>Involved in anaphase spindle elongation.</text>
</comment>
<comment type="subcellular location">
    <subcellularLocation>
        <location evidence="4">Cytoplasm</location>
        <location evidence="4">Cytoskeleton</location>
    </subcellularLocation>
</comment>
<comment type="similarity">
    <text evidence="2">Belongs to the TRAFAC class myosin-kinesin ATPase superfamily. Kinesin family. MCAK/KIF2 subfamily.</text>
</comment>
<evidence type="ECO:0000255" key="1"/>
<evidence type="ECO:0000255" key="2">
    <source>
        <dbReference type="PROSITE-ProRule" id="PRU00283"/>
    </source>
</evidence>
<evidence type="ECO:0000256" key="3">
    <source>
        <dbReference type="SAM" id="MobiDB-lite"/>
    </source>
</evidence>
<evidence type="ECO:0000305" key="4"/>
<name>DSK1_CYLFU</name>
<protein>
    <recommendedName>
        <fullName>Diatom spindle kinesin-1</fullName>
    </recommendedName>
</protein>
<feature type="chain" id="PRO_0000125423" description="Diatom spindle kinesin-1">
    <location>
        <begin position="1"/>
        <end position="624"/>
    </location>
</feature>
<feature type="domain" description="Kinesin motor" evidence="2">
    <location>
        <begin position="95"/>
        <end position="411"/>
    </location>
</feature>
<feature type="region of interest" description="Globular" evidence="1">
    <location>
        <begin position="1"/>
        <end position="85"/>
    </location>
</feature>
<feature type="region of interest" description="Disordered" evidence="3">
    <location>
        <begin position="1"/>
        <end position="59"/>
    </location>
</feature>
<feature type="region of interest" description="Disordered" evidence="3">
    <location>
        <begin position="478"/>
        <end position="528"/>
    </location>
</feature>
<feature type="coiled-coil region" evidence="1">
    <location>
        <begin position="426"/>
        <end position="624"/>
    </location>
</feature>
<feature type="compositionally biased region" description="Basic and acidic residues" evidence="3">
    <location>
        <begin position="17"/>
        <end position="33"/>
    </location>
</feature>
<feature type="compositionally biased region" description="Basic and acidic residues" evidence="3">
    <location>
        <begin position="42"/>
        <end position="54"/>
    </location>
</feature>
<feature type="compositionally biased region" description="Acidic residues" evidence="3">
    <location>
        <begin position="478"/>
        <end position="511"/>
    </location>
</feature>
<feature type="binding site" evidence="2">
    <location>
        <begin position="186"/>
        <end position="193"/>
    </location>
    <ligand>
        <name>ATP</name>
        <dbReference type="ChEBI" id="CHEBI:30616"/>
    </ligand>
</feature>
<reference key="1">
    <citation type="journal article" date="1996" name="J. Cell Biol.">
        <title>DSK1, a novel kinesin-related protein from the diatom Cylindrotheca fusiformis that is involved in anaphase spindle elongation.</title>
        <authorList>
            <person name="Wein H."/>
            <person name="Foss M."/>
            <person name="Brady B."/>
            <person name="Cande W.Z."/>
        </authorList>
    </citation>
    <scope>NUCLEOTIDE SEQUENCE [MRNA]</scope>
</reference>
<sequence>MNAANRRKSTSTVGITGRKDATRMKIEQMEKERKERRKTMMQRKEARKQEHMKNIEAGNPGDVDFIGLVEEWRREQENKIGDKSPPSLFASTNSNICIAVRKRPISDKERQKLDHDSVSCFQNKVWIHSAKLKVDGITKYLTHNSFQLDHTFGEDSTTEQIYLATTLPLVDHVVSTQGRATVFCYGQTGSGKTYTMNGIQQILAYDLYGQLAEHTDDLEITVAFFELYSGNVLDLLHGCQRCKLLEDGNGEVNITGLREVPAPTPEAFLQVIEEGHSLRTTQKTEANDASSRSHAICQVFLRDYGGNLRGKLGLVDLAGSERGSDTKQHNSQRRTESADINTSLLALKECIRALGQKSAHVPYRGSKLTLILKDCFSPDSKTTMVATVSPGASAADHSLNTLRYADRIKEQRVSSNGQRGKAAKASNREIMPSKERLMRIAAATEQADDQHSAFVQKMLAEHDQVQADANDYAFTEQVDEEEADDEEGDYEEESEDLDYEDSEGQDYEEAVESQYDHSQEAQEGEEELRRTVQAVFELEEALLNQHMSNIQANAEMLTQEGKLLQSVQAGGLSEDEMHNYAIQLAEFLDKKESLIYKLQSKLDEFQEQLAREQELARQVQLTQY</sequence>
<gene>
    <name type="primary">DSK1</name>
</gene>
<dbReference type="EMBL" id="U51680">
    <property type="protein sequence ID" value="AAB05681.1"/>
    <property type="molecule type" value="mRNA"/>
</dbReference>
<dbReference type="SMR" id="Q39493"/>
<dbReference type="GO" id="GO:0005737">
    <property type="term" value="C:cytoplasm"/>
    <property type="evidence" value="ECO:0007669"/>
    <property type="project" value="UniProtKB-KW"/>
</dbReference>
<dbReference type="GO" id="GO:0005874">
    <property type="term" value="C:microtubule"/>
    <property type="evidence" value="ECO:0007669"/>
    <property type="project" value="UniProtKB-KW"/>
</dbReference>
<dbReference type="GO" id="GO:0005524">
    <property type="term" value="F:ATP binding"/>
    <property type="evidence" value="ECO:0007669"/>
    <property type="project" value="UniProtKB-KW"/>
</dbReference>
<dbReference type="GO" id="GO:0008017">
    <property type="term" value="F:microtubule binding"/>
    <property type="evidence" value="ECO:0007669"/>
    <property type="project" value="InterPro"/>
</dbReference>
<dbReference type="GO" id="GO:0003777">
    <property type="term" value="F:microtubule motor activity"/>
    <property type="evidence" value="ECO:0007669"/>
    <property type="project" value="InterPro"/>
</dbReference>
<dbReference type="GO" id="GO:0007019">
    <property type="term" value="P:microtubule depolymerization"/>
    <property type="evidence" value="ECO:0007669"/>
    <property type="project" value="TreeGrafter"/>
</dbReference>
<dbReference type="GO" id="GO:0007018">
    <property type="term" value="P:microtubule-based movement"/>
    <property type="evidence" value="ECO:0007669"/>
    <property type="project" value="InterPro"/>
</dbReference>
<dbReference type="CDD" id="cd01367">
    <property type="entry name" value="KISc_KIF2_like"/>
    <property type="match status" value="1"/>
</dbReference>
<dbReference type="FunFam" id="3.40.850.10:FF:000012">
    <property type="entry name" value="Kinesin-like protein"/>
    <property type="match status" value="1"/>
</dbReference>
<dbReference type="Gene3D" id="3.40.850.10">
    <property type="entry name" value="Kinesin motor domain"/>
    <property type="match status" value="1"/>
</dbReference>
<dbReference type="InterPro" id="IPR027640">
    <property type="entry name" value="Kinesin-like_fam"/>
</dbReference>
<dbReference type="InterPro" id="IPR019821">
    <property type="entry name" value="Kinesin_motor_CS"/>
</dbReference>
<dbReference type="InterPro" id="IPR001752">
    <property type="entry name" value="Kinesin_motor_dom"/>
</dbReference>
<dbReference type="InterPro" id="IPR036961">
    <property type="entry name" value="Kinesin_motor_dom_sf"/>
</dbReference>
<dbReference type="InterPro" id="IPR027417">
    <property type="entry name" value="P-loop_NTPase"/>
</dbReference>
<dbReference type="PANTHER" id="PTHR47971:SF20">
    <property type="entry name" value="KINESIN-LIKE PROTEIN KIF24"/>
    <property type="match status" value="1"/>
</dbReference>
<dbReference type="PANTHER" id="PTHR47971">
    <property type="entry name" value="KINESIN-RELATED PROTEIN 6"/>
    <property type="match status" value="1"/>
</dbReference>
<dbReference type="Pfam" id="PF00225">
    <property type="entry name" value="Kinesin"/>
    <property type="match status" value="1"/>
</dbReference>
<dbReference type="PRINTS" id="PR00380">
    <property type="entry name" value="KINESINHEAVY"/>
</dbReference>
<dbReference type="SMART" id="SM00129">
    <property type="entry name" value="KISc"/>
    <property type="match status" value="1"/>
</dbReference>
<dbReference type="SUPFAM" id="SSF52540">
    <property type="entry name" value="P-loop containing nucleoside triphosphate hydrolases"/>
    <property type="match status" value="1"/>
</dbReference>
<dbReference type="PROSITE" id="PS00411">
    <property type="entry name" value="KINESIN_MOTOR_1"/>
    <property type="match status" value="1"/>
</dbReference>
<dbReference type="PROSITE" id="PS50067">
    <property type="entry name" value="KINESIN_MOTOR_2"/>
    <property type="match status" value="1"/>
</dbReference>
<organism>
    <name type="scientific">Cylindrotheca fusiformis</name>
    <name type="common">Marine diatom</name>
    <dbReference type="NCBI Taxonomy" id="2853"/>
    <lineage>
        <taxon>Eukaryota</taxon>
        <taxon>Sar</taxon>
        <taxon>Stramenopiles</taxon>
        <taxon>Ochrophyta</taxon>
        <taxon>Bacillariophyta</taxon>
        <taxon>Bacillariophyceae</taxon>
        <taxon>Bacillariophycidae</taxon>
        <taxon>Bacillariales</taxon>
        <taxon>Bacillariaceae</taxon>
        <taxon>Cylindrotheca</taxon>
    </lineage>
</organism>
<keyword id="KW-0067">ATP-binding</keyword>
<keyword id="KW-0175">Coiled coil</keyword>
<keyword id="KW-0963">Cytoplasm</keyword>
<keyword id="KW-0206">Cytoskeleton</keyword>
<keyword id="KW-0493">Microtubule</keyword>
<keyword id="KW-0505">Motor protein</keyword>
<keyword id="KW-0547">Nucleotide-binding</keyword>